<name>TBCD7_HUMAN</name>
<reference key="1">
    <citation type="journal article" date="2009" name="Genes Cells">
        <title>Identification and characterization of a novel Tre-2/Bub2/Cdc16 (TBC) protein that possesses Rab3A-GAP activity.</title>
        <authorList>
            <person name="Ishibashi K."/>
            <person name="Kanno E."/>
            <person name="Itoh T."/>
            <person name="Fukuda M."/>
        </authorList>
    </citation>
    <scope>NUCLEOTIDE SEQUENCE [MRNA] (ISOFORM 1)</scope>
    <source>
        <tissue>Brain</tissue>
    </source>
</reference>
<reference key="2">
    <citation type="submission" date="2004-10" db="EMBL/GenBank/DDBJ databases">
        <title>Identification of a migration-inducing gene.</title>
        <authorList>
            <person name="Kim J.W."/>
        </authorList>
    </citation>
    <scope>NUCLEOTIDE SEQUENCE [MRNA] (ISOFORM 2)</scope>
</reference>
<reference key="3">
    <citation type="journal article" date="2004" name="Nat. Genet.">
        <title>Complete sequencing and characterization of 21,243 full-length human cDNAs.</title>
        <authorList>
            <person name="Ota T."/>
            <person name="Suzuki Y."/>
            <person name="Nishikawa T."/>
            <person name="Otsuki T."/>
            <person name="Sugiyama T."/>
            <person name="Irie R."/>
            <person name="Wakamatsu A."/>
            <person name="Hayashi K."/>
            <person name="Sato H."/>
            <person name="Nagai K."/>
            <person name="Kimura K."/>
            <person name="Makita H."/>
            <person name="Sekine M."/>
            <person name="Obayashi M."/>
            <person name="Nishi T."/>
            <person name="Shibahara T."/>
            <person name="Tanaka T."/>
            <person name="Ishii S."/>
            <person name="Yamamoto J."/>
            <person name="Saito K."/>
            <person name="Kawai Y."/>
            <person name="Isono Y."/>
            <person name="Nakamura Y."/>
            <person name="Nagahari K."/>
            <person name="Murakami K."/>
            <person name="Yasuda T."/>
            <person name="Iwayanagi T."/>
            <person name="Wagatsuma M."/>
            <person name="Shiratori A."/>
            <person name="Sudo H."/>
            <person name="Hosoiri T."/>
            <person name="Kaku Y."/>
            <person name="Kodaira H."/>
            <person name="Kondo H."/>
            <person name="Sugawara M."/>
            <person name="Takahashi M."/>
            <person name="Kanda K."/>
            <person name="Yokoi T."/>
            <person name="Furuya T."/>
            <person name="Kikkawa E."/>
            <person name="Omura Y."/>
            <person name="Abe K."/>
            <person name="Kamihara K."/>
            <person name="Katsuta N."/>
            <person name="Sato K."/>
            <person name="Tanikawa M."/>
            <person name="Yamazaki M."/>
            <person name="Ninomiya K."/>
            <person name="Ishibashi T."/>
            <person name="Yamashita H."/>
            <person name="Murakawa K."/>
            <person name="Fujimori K."/>
            <person name="Tanai H."/>
            <person name="Kimata M."/>
            <person name="Watanabe M."/>
            <person name="Hiraoka S."/>
            <person name="Chiba Y."/>
            <person name="Ishida S."/>
            <person name="Ono Y."/>
            <person name="Takiguchi S."/>
            <person name="Watanabe S."/>
            <person name="Yosida M."/>
            <person name="Hotuta T."/>
            <person name="Kusano J."/>
            <person name="Kanehori K."/>
            <person name="Takahashi-Fujii A."/>
            <person name="Hara H."/>
            <person name="Tanase T.-O."/>
            <person name="Nomura Y."/>
            <person name="Togiya S."/>
            <person name="Komai F."/>
            <person name="Hara R."/>
            <person name="Takeuchi K."/>
            <person name="Arita M."/>
            <person name="Imose N."/>
            <person name="Musashino K."/>
            <person name="Yuuki H."/>
            <person name="Oshima A."/>
            <person name="Sasaki N."/>
            <person name="Aotsuka S."/>
            <person name="Yoshikawa Y."/>
            <person name="Matsunawa H."/>
            <person name="Ichihara T."/>
            <person name="Shiohata N."/>
            <person name="Sano S."/>
            <person name="Moriya S."/>
            <person name="Momiyama H."/>
            <person name="Satoh N."/>
            <person name="Takami S."/>
            <person name="Terashima Y."/>
            <person name="Suzuki O."/>
            <person name="Nakagawa S."/>
            <person name="Senoh A."/>
            <person name="Mizoguchi H."/>
            <person name="Goto Y."/>
            <person name="Shimizu F."/>
            <person name="Wakebe H."/>
            <person name="Hishigaki H."/>
            <person name="Watanabe T."/>
            <person name="Sugiyama A."/>
            <person name="Takemoto M."/>
            <person name="Kawakami B."/>
            <person name="Yamazaki M."/>
            <person name="Watanabe K."/>
            <person name="Kumagai A."/>
            <person name="Itakura S."/>
            <person name="Fukuzumi Y."/>
            <person name="Fujimori Y."/>
            <person name="Komiyama M."/>
            <person name="Tashiro H."/>
            <person name="Tanigami A."/>
            <person name="Fujiwara T."/>
            <person name="Ono T."/>
            <person name="Yamada K."/>
            <person name="Fujii Y."/>
            <person name="Ozaki K."/>
            <person name="Hirao M."/>
            <person name="Ohmori Y."/>
            <person name="Kawabata A."/>
            <person name="Hikiji T."/>
            <person name="Kobatake N."/>
            <person name="Inagaki H."/>
            <person name="Ikema Y."/>
            <person name="Okamoto S."/>
            <person name="Okitani R."/>
            <person name="Kawakami T."/>
            <person name="Noguchi S."/>
            <person name="Itoh T."/>
            <person name="Shigeta K."/>
            <person name="Senba T."/>
            <person name="Matsumura K."/>
            <person name="Nakajima Y."/>
            <person name="Mizuno T."/>
            <person name="Morinaga M."/>
            <person name="Sasaki M."/>
            <person name="Togashi T."/>
            <person name="Oyama M."/>
            <person name="Hata H."/>
            <person name="Watanabe M."/>
            <person name="Komatsu T."/>
            <person name="Mizushima-Sugano J."/>
            <person name="Satoh T."/>
            <person name="Shirai Y."/>
            <person name="Takahashi Y."/>
            <person name="Nakagawa K."/>
            <person name="Okumura K."/>
            <person name="Nagase T."/>
            <person name="Nomura N."/>
            <person name="Kikuchi H."/>
            <person name="Masuho Y."/>
            <person name="Yamashita R."/>
            <person name="Nakai K."/>
            <person name="Yada T."/>
            <person name="Nakamura Y."/>
            <person name="Ohara O."/>
            <person name="Isogai T."/>
            <person name="Sugano S."/>
        </authorList>
    </citation>
    <scope>NUCLEOTIDE SEQUENCE [LARGE SCALE MRNA] (ISOFORM 3)</scope>
    <source>
        <tissue>Testis</tissue>
    </source>
</reference>
<reference key="4">
    <citation type="journal article" date="2000" name="Genome Res.">
        <title>Cloning and functional analysis of cDNAs with open reading frames for 300 previously undefined genes expressed in CD34+ hematopoietic stem/progenitor cells.</title>
        <authorList>
            <person name="Zhang Q.-H."/>
            <person name="Ye M."/>
            <person name="Wu X.-Y."/>
            <person name="Ren S.-X."/>
            <person name="Zhao M."/>
            <person name="Zhao C.-J."/>
            <person name="Fu G."/>
            <person name="Shen Y."/>
            <person name="Fan H.-Y."/>
            <person name="Lu G."/>
            <person name="Zhong M."/>
            <person name="Xu X.-R."/>
            <person name="Han Z.-G."/>
            <person name="Zhang J.-W."/>
            <person name="Tao J."/>
            <person name="Huang Q.-H."/>
            <person name="Zhou J."/>
            <person name="Hu G.-X."/>
            <person name="Gu J."/>
            <person name="Chen S.-J."/>
            <person name="Chen Z."/>
        </authorList>
    </citation>
    <scope>NUCLEOTIDE SEQUENCE [LARGE SCALE MRNA] (ISOFORM 1)</scope>
    <source>
        <tissue>Umbilical cord blood</tissue>
    </source>
</reference>
<reference key="5">
    <citation type="submission" date="2004-02" db="EMBL/GenBank/DDBJ databases">
        <title>Identification of a human cell proliferation inducing gene.</title>
        <authorList>
            <person name="Kim J.W."/>
        </authorList>
    </citation>
    <scope>NUCLEOTIDE SEQUENCE [LARGE SCALE MRNA] (ISOFORM 4)</scope>
</reference>
<reference key="6">
    <citation type="submission" date="2005-04" db="EMBL/GenBank/DDBJ databases">
        <authorList>
            <person name="Totoki Y."/>
            <person name="Toyoda A."/>
            <person name="Takeda T."/>
            <person name="Sakaki Y."/>
            <person name="Tanaka A."/>
            <person name="Yokoyama S."/>
        </authorList>
    </citation>
    <scope>NUCLEOTIDE SEQUENCE [LARGE SCALE MRNA] (ISOFORM 1)</scope>
    <source>
        <tissue>Brain</tissue>
    </source>
</reference>
<reference key="7">
    <citation type="journal article" date="2003" name="Nature">
        <title>The DNA sequence and analysis of human chromosome 6.</title>
        <authorList>
            <person name="Mungall A.J."/>
            <person name="Palmer S.A."/>
            <person name="Sims S.K."/>
            <person name="Edwards C.A."/>
            <person name="Ashurst J.L."/>
            <person name="Wilming L."/>
            <person name="Jones M.C."/>
            <person name="Horton R."/>
            <person name="Hunt S.E."/>
            <person name="Scott C.E."/>
            <person name="Gilbert J.G.R."/>
            <person name="Clamp M.E."/>
            <person name="Bethel G."/>
            <person name="Milne S."/>
            <person name="Ainscough R."/>
            <person name="Almeida J.P."/>
            <person name="Ambrose K.D."/>
            <person name="Andrews T.D."/>
            <person name="Ashwell R.I.S."/>
            <person name="Babbage A.K."/>
            <person name="Bagguley C.L."/>
            <person name="Bailey J."/>
            <person name="Banerjee R."/>
            <person name="Barker D.J."/>
            <person name="Barlow K.F."/>
            <person name="Bates K."/>
            <person name="Beare D.M."/>
            <person name="Beasley H."/>
            <person name="Beasley O."/>
            <person name="Bird C.P."/>
            <person name="Blakey S.E."/>
            <person name="Bray-Allen S."/>
            <person name="Brook J."/>
            <person name="Brown A.J."/>
            <person name="Brown J.Y."/>
            <person name="Burford D.C."/>
            <person name="Burrill W."/>
            <person name="Burton J."/>
            <person name="Carder C."/>
            <person name="Carter N.P."/>
            <person name="Chapman J.C."/>
            <person name="Clark S.Y."/>
            <person name="Clark G."/>
            <person name="Clee C.M."/>
            <person name="Clegg S."/>
            <person name="Cobley V."/>
            <person name="Collier R.E."/>
            <person name="Collins J.E."/>
            <person name="Colman L.K."/>
            <person name="Corby N.R."/>
            <person name="Coville G.J."/>
            <person name="Culley K.M."/>
            <person name="Dhami P."/>
            <person name="Davies J."/>
            <person name="Dunn M."/>
            <person name="Earthrowl M.E."/>
            <person name="Ellington A.E."/>
            <person name="Evans K.A."/>
            <person name="Faulkner L."/>
            <person name="Francis M.D."/>
            <person name="Frankish A."/>
            <person name="Frankland J."/>
            <person name="French L."/>
            <person name="Garner P."/>
            <person name="Garnett J."/>
            <person name="Ghori M.J."/>
            <person name="Gilby L.M."/>
            <person name="Gillson C.J."/>
            <person name="Glithero R.J."/>
            <person name="Grafham D.V."/>
            <person name="Grant M."/>
            <person name="Gribble S."/>
            <person name="Griffiths C."/>
            <person name="Griffiths M.N.D."/>
            <person name="Hall R."/>
            <person name="Halls K.S."/>
            <person name="Hammond S."/>
            <person name="Harley J.L."/>
            <person name="Hart E.A."/>
            <person name="Heath P.D."/>
            <person name="Heathcott R."/>
            <person name="Holmes S.J."/>
            <person name="Howden P.J."/>
            <person name="Howe K.L."/>
            <person name="Howell G.R."/>
            <person name="Huckle E."/>
            <person name="Humphray S.J."/>
            <person name="Humphries M.D."/>
            <person name="Hunt A.R."/>
            <person name="Johnson C.M."/>
            <person name="Joy A.A."/>
            <person name="Kay M."/>
            <person name="Keenan S.J."/>
            <person name="Kimberley A.M."/>
            <person name="King A."/>
            <person name="Laird G.K."/>
            <person name="Langford C."/>
            <person name="Lawlor S."/>
            <person name="Leongamornlert D.A."/>
            <person name="Leversha M."/>
            <person name="Lloyd C.R."/>
            <person name="Lloyd D.M."/>
            <person name="Loveland J.E."/>
            <person name="Lovell J."/>
            <person name="Martin S."/>
            <person name="Mashreghi-Mohammadi M."/>
            <person name="Maslen G.L."/>
            <person name="Matthews L."/>
            <person name="McCann O.T."/>
            <person name="McLaren S.J."/>
            <person name="McLay K."/>
            <person name="McMurray A."/>
            <person name="Moore M.J.F."/>
            <person name="Mullikin J.C."/>
            <person name="Niblett D."/>
            <person name="Nickerson T."/>
            <person name="Novik K.L."/>
            <person name="Oliver K."/>
            <person name="Overton-Larty E.K."/>
            <person name="Parker A."/>
            <person name="Patel R."/>
            <person name="Pearce A.V."/>
            <person name="Peck A.I."/>
            <person name="Phillimore B.J.C.T."/>
            <person name="Phillips S."/>
            <person name="Plumb R.W."/>
            <person name="Porter K.M."/>
            <person name="Ramsey Y."/>
            <person name="Ranby S.A."/>
            <person name="Rice C.M."/>
            <person name="Ross M.T."/>
            <person name="Searle S.M."/>
            <person name="Sehra H.K."/>
            <person name="Sheridan E."/>
            <person name="Skuce C.D."/>
            <person name="Smith S."/>
            <person name="Smith M."/>
            <person name="Spraggon L."/>
            <person name="Squares S.L."/>
            <person name="Steward C.A."/>
            <person name="Sycamore N."/>
            <person name="Tamlyn-Hall G."/>
            <person name="Tester J."/>
            <person name="Theaker A.J."/>
            <person name="Thomas D.W."/>
            <person name="Thorpe A."/>
            <person name="Tracey A."/>
            <person name="Tromans A."/>
            <person name="Tubby B."/>
            <person name="Wall M."/>
            <person name="Wallis J.M."/>
            <person name="West A.P."/>
            <person name="White S.S."/>
            <person name="Whitehead S.L."/>
            <person name="Whittaker H."/>
            <person name="Wild A."/>
            <person name="Willey D.J."/>
            <person name="Wilmer T.E."/>
            <person name="Wood J.M."/>
            <person name="Wray P.W."/>
            <person name="Wyatt J.C."/>
            <person name="Young L."/>
            <person name="Younger R.M."/>
            <person name="Bentley D.R."/>
            <person name="Coulson A."/>
            <person name="Durbin R.M."/>
            <person name="Hubbard T."/>
            <person name="Sulston J.E."/>
            <person name="Dunham I."/>
            <person name="Rogers J."/>
            <person name="Beck S."/>
        </authorList>
    </citation>
    <scope>NUCLEOTIDE SEQUENCE [LARGE SCALE GENOMIC DNA]</scope>
</reference>
<reference key="8">
    <citation type="submission" date="2005-07" db="EMBL/GenBank/DDBJ databases">
        <authorList>
            <person name="Mural R.J."/>
            <person name="Istrail S."/>
            <person name="Sutton G.G."/>
            <person name="Florea L."/>
            <person name="Halpern A.L."/>
            <person name="Mobarry C.M."/>
            <person name="Lippert R."/>
            <person name="Walenz B."/>
            <person name="Shatkay H."/>
            <person name="Dew I."/>
            <person name="Miller J.R."/>
            <person name="Flanigan M.J."/>
            <person name="Edwards N.J."/>
            <person name="Bolanos R."/>
            <person name="Fasulo D."/>
            <person name="Halldorsson B.V."/>
            <person name="Hannenhalli S."/>
            <person name="Turner R."/>
            <person name="Yooseph S."/>
            <person name="Lu F."/>
            <person name="Nusskern D.R."/>
            <person name="Shue B.C."/>
            <person name="Zheng X.H."/>
            <person name="Zhong F."/>
            <person name="Delcher A.L."/>
            <person name="Huson D.H."/>
            <person name="Kravitz S.A."/>
            <person name="Mouchard L."/>
            <person name="Reinert K."/>
            <person name="Remington K.A."/>
            <person name="Clark A.G."/>
            <person name="Waterman M.S."/>
            <person name="Eichler E.E."/>
            <person name="Adams M.D."/>
            <person name="Hunkapiller M.W."/>
            <person name="Myers E.W."/>
            <person name="Venter J.C."/>
        </authorList>
    </citation>
    <scope>NUCLEOTIDE SEQUENCE [LARGE SCALE GENOMIC DNA]</scope>
</reference>
<reference key="9">
    <citation type="journal article" date="2004" name="Genome Res.">
        <title>The status, quality, and expansion of the NIH full-length cDNA project: the Mammalian Gene Collection (MGC).</title>
        <authorList>
            <consortium name="The MGC Project Team"/>
        </authorList>
    </citation>
    <scope>NUCLEOTIDE SEQUENCE [LARGE SCALE MRNA] (ISOFPORMS 1 AND 2)</scope>
    <source>
        <tissue>Eye</tissue>
        <tissue>Kidney</tissue>
    </source>
</reference>
<reference key="10">
    <citation type="journal article" date="2007" name="Biochem. Biophys. Res. Commun.">
        <title>Identification of TBC7 having TBC domain as a novel binding protein to TSC1-TSC2 complex.</title>
        <authorList>
            <person name="Nakashima A."/>
            <person name="Yoshino K."/>
            <person name="Miyamoto T."/>
            <person name="Eguchi S."/>
            <person name="Oshiro N."/>
            <person name="Kikkawa U."/>
            <person name="Yonezawa K."/>
        </authorList>
    </citation>
    <scope>IDENTIFICATION BY MASS SPECTROMETRY</scope>
    <scope>TISSUE SPECIFICITY</scope>
    <scope>SUBCELLULAR LOCATION</scope>
    <scope>INTERACTION WITH TSC1</scope>
</reference>
<reference key="11">
    <citation type="journal article" date="2012" name="Mol. Cell">
        <title>TBC1D7 is a third subunit of the TSC1-TSC2 complex upstream of mTORC1.</title>
        <authorList>
            <person name="Dibble C.C."/>
            <person name="Elis W."/>
            <person name="Menon S."/>
            <person name="Qin W."/>
            <person name="Klekota J."/>
            <person name="Asara J.M."/>
            <person name="Finan P.M."/>
            <person name="Kwiatkowski D.J."/>
            <person name="Murphy L.O."/>
            <person name="Manning B.D."/>
        </authorList>
    </citation>
    <scope>FUNCTION</scope>
    <scope>IDENTIFICATION IN THE TSC-TBC COMPLEX</scope>
    <scope>INTERACTION WITH TSC1</scope>
</reference>
<reference key="12">
    <citation type="journal article" date="2013" name="J. Med. Genet.">
        <title>Disruption of TBC1D7, a subunit of the TSC1-TSC2 protein complex, in intellectual disability and megalencephaly.</title>
        <authorList>
            <person name="Capo-Chichi J.M."/>
            <person name="Tcherkezian J."/>
            <person name="Hamdan F.F."/>
            <person name="Decarie J.C."/>
            <person name="Dobrzeniecka S."/>
            <person name="Patry L."/>
            <person name="Nadon M.A."/>
            <person name="Mucha B.E."/>
            <person name="Major P."/>
            <person name="Shevell M."/>
            <person name="Bencheikh B.O."/>
            <person name="Joober R."/>
            <person name="Samuels M.E."/>
            <person name="Rouleau G.A."/>
            <person name="Roux P.P."/>
            <person name="Michaud J.L."/>
        </authorList>
    </citation>
    <scope>INVOLVEMENT IN MGCPH</scope>
</reference>
<reference key="13">
    <citation type="journal article" date="2014" name="Hum. Mutat.">
        <title>TBC1D7 mutations are associated with intellectual disability, macrocrania, patellar dislocation and celiac disease.</title>
        <authorList>
            <person name="Alfaiz A.A."/>
            <person name="Micale L."/>
            <person name="Mandriani B."/>
            <person name="Augello B."/>
            <person name="Pellico M.T."/>
            <person name="Chrast J."/>
            <person name="Xenarios I."/>
            <person name="Zelante L."/>
            <person name="Merla G."/>
            <person name="Reymond A."/>
        </authorList>
    </citation>
    <scope>INVOLVEMENT IN MGCPH</scope>
</reference>
<reference key="14">
    <citation type="journal article" date="2014" name="Cell">
        <title>Spatial control of the TSC complex integrates insulin and nutrient regulation of mTORC1 at the lysosome.</title>
        <authorList>
            <person name="Menon S."/>
            <person name="Dibble C.C."/>
            <person name="Talbott G."/>
            <person name="Hoxhaj G."/>
            <person name="Valvezan A.J."/>
            <person name="Takahashi H."/>
            <person name="Cantley L.C."/>
            <person name="Manning B.D."/>
        </authorList>
    </citation>
    <scope>FUNCTION</scope>
    <scope>IDENTIFICATION IN THE TSC-TBC COMPLEX</scope>
    <scope>SUBCELLULAR LOCATION</scope>
</reference>
<reference key="15">
    <citation type="submission" date="2011-06" db="PDB data bank">
        <title>Crystal structure of human tbc1 domain family member 7.</title>
        <authorList>
            <consortium name="Structural genomics consortium (SGC)"/>
        </authorList>
    </citation>
    <scope>X-RAY CRYSTALLOGRAPHY (1.9 ANGSTROMS)</scope>
</reference>
<reference evidence="18" key="16">
    <citation type="journal article" date="2016" name="J. Biol. Chem.">
        <title>Structural basis of the interaction between tuberous sclerosis complex 1 (TSC1) and Tre2-Bub2-Cdc16 domain family member 7 (TBC1D7).</title>
        <authorList>
            <person name="Qin J."/>
            <person name="Wang Z."/>
            <person name="Hoogeveen-Westerveld M."/>
            <person name="Shen G."/>
            <person name="Gong W."/>
            <person name="Nellist M."/>
            <person name="Xu W."/>
        </authorList>
    </citation>
    <scope>X-RAY CRYSTALLOGRAPHY (3.10 ANGSTROMS) OF 18-293 IN COMPLEX WITH TSC1</scope>
    <scope>INTERACTION WITH TSC1</scope>
    <scope>MUTAGENESIS OF 81-ARG--GLN-84; 94-VAL-VAL-95; ARG-96; LEU-114 AND ARG-121</scope>
</reference>
<reference evidence="19" key="17">
    <citation type="journal article" date="2021" name="Nat. Commun.">
        <title>Structural insights into TSC complex assembly and GAP activity on Rheb.</title>
        <authorList>
            <person name="Yang H."/>
            <person name="Yu Z."/>
            <person name="Chen X."/>
            <person name="Li J."/>
            <person name="Li N."/>
            <person name="Cheng J."/>
            <person name="Gao N."/>
            <person name="Yuan H.X."/>
            <person name="Ye D."/>
            <person name="Guan K.L."/>
            <person name="Xu Y."/>
        </authorList>
    </citation>
    <scope>STRUCTURE BY ELECTRON MICROSCOPY (4.40 ANGSTROMS) OF 21-287 IN COMPLEX WITH TSC1 AND TSC2</scope>
    <scope>IDENTIFICATION IN THE TSC-TBC COMPLEX</scope>
</reference>
<protein>
    <recommendedName>
        <fullName evidence="12">TBC1 domain family member 7</fullName>
    </recommendedName>
    <alternativeName>
        <fullName evidence="13">Cell migration-inducing protein 23</fullName>
    </alternativeName>
</protein>
<organism>
    <name type="scientific">Homo sapiens</name>
    <name type="common">Human</name>
    <dbReference type="NCBI Taxonomy" id="9606"/>
    <lineage>
        <taxon>Eukaryota</taxon>
        <taxon>Metazoa</taxon>
        <taxon>Chordata</taxon>
        <taxon>Craniata</taxon>
        <taxon>Vertebrata</taxon>
        <taxon>Euteleostomi</taxon>
        <taxon>Mammalia</taxon>
        <taxon>Eutheria</taxon>
        <taxon>Euarchontoglires</taxon>
        <taxon>Primates</taxon>
        <taxon>Haplorrhini</taxon>
        <taxon>Catarrhini</taxon>
        <taxon>Hominidae</taxon>
        <taxon>Homo</taxon>
    </lineage>
</organism>
<comment type="function">
    <text evidence="3 6">Non-catalytic component of the TSC-TBC complex, a multiprotein complex that acts as a negative regulator of the canonical mTORC1 complex, an evolutionarily conserved central nutrient sensor that stimulates anabolic reactions and macromolecule biosynthesis to promote cellular biomass generation and growth (PubMed:22795129, PubMed:24529379). The TSC-TBC complex acts as a GTPase-activating protein (GAP) for the small GTPase RHEB, a direct activator of the protein kinase activity of mTORC1 (PubMed:22795129, PubMed:24529379). In absence of nutrients, the TSC-TBC complex inhibits mTORC1, thereby preventing phosphorylation of ribosomal protein S6 kinase (RPS6KB1 and RPS6KB2) and EIF4EBP1 (4E-BP1) by the mTORC1 signaling (PubMed:22795129). The TSC-TBC complex is inactivated in response to nutrients, relieving inhibition of mTORC1 (PubMed:24529379).</text>
</comment>
<comment type="subunit">
    <text evidence="2 3 6 7 8">Component of the TSC-TBC complex (also named Rhebulator complex), composed of 2 molecules of TSC1, 2 molecules of TSC2 and 1 molecule of TBC1D7 (PubMed:17658474, PubMed:22795129, PubMed:24529379, PubMed:33436626). Interacts with TSC1 (via C-terminal half of the coiled-coil domain) (PubMed:17658474, PubMed:26893383).</text>
</comment>
<comment type="interaction">
    <interactant intactId="EBI-3258000">
        <id>Q9P0N9</id>
    </interactant>
    <interactant intactId="EBI-79934">
        <id>P09917</id>
        <label>ALOX5</label>
    </interactant>
    <organismsDiffer>false</organismsDiffer>
    <experiments>3</experiments>
</comment>
<comment type="interaction">
    <interactant intactId="EBI-3258000">
        <id>Q9P0N9</id>
    </interactant>
    <interactant intactId="EBI-2949658">
        <id>O95429</id>
        <label>BAG4</label>
    </interactant>
    <organismsDiffer>false</organismsDiffer>
    <experiments>5</experiments>
</comment>
<comment type="interaction">
    <interactant intactId="EBI-3258000">
        <id>Q9P0N9</id>
    </interactant>
    <interactant intactId="EBI-2548012">
        <id>Q9H2G9</id>
        <label>BLZF1</label>
    </interactant>
    <organismsDiffer>false</organismsDiffer>
    <experiments>8</experiments>
</comment>
<comment type="interaction">
    <interactant intactId="EBI-3258000">
        <id>Q9P0N9</id>
    </interactant>
    <interactant intactId="EBI-746704">
        <id>Q9UJC3</id>
        <label>HOOK1</label>
    </interactant>
    <organismsDiffer>false</organismsDiffer>
    <experiments>7</experiments>
</comment>
<comment type="interaction">
    <interactant intactId="EBI-3258000">
        <id>Q9P0N9</id>
    </interactant>
    <interactant intactId="EBI-6509505">
        <id>Q0VD86</id>
        <label>INCA1</label>
    </interactant>
    <organismsDiffer>false</organismsDiffer>
    <experiments>3</experiments>
</comment>
<comment type="interaction">
    <interactant intactId="EBI-3258000">
        <id>Q9P0N9</id>
    </interactant>
    <interactant intactId="EBI-751001">
        <id>Q14145</id>
        <label>KEAP1</label>
    </interactant>
    <organismsDiffer>false</organismsDiffer>
    <experiments>3</experiments>
</comment>
<comment type="interaction">
    <interactant intactId="EBI-3258000">
        <id>Q9P0N9</id>
    </interactant>
    <interactant intactId="EBI-742756">
        <id>P08727</id>
        <label>KRT19</label>
    </interactant>
    <organismsDiffer>false</organismsDiffer>
    <experiments>7</experiments>
</comment>
<comment type="interaction">
    <interactant intactId="EBI-3258000">
        <id>Q9P0N9</id>
    </interactant>
    <interactant intactId="EBI-1058674">
        <id>Q92764</id>
        <label>KRT35</label>
    </interactant>
    <organismsDiffer>false</organismsDiffer>
    <experiments>3</experiments>
</comment>
<comment type="interaction">
    <interactant intactId="EBI-3258000">
        <id>Q9P0N9</id>
    </interactant>
    <interactant intactId="EBI-740738">
        <id>O95751</id>
        <label>LDOC1</label>
    </interactant>
    <organismsDiffer>false</organismsDiffer>
    <experiments>6</experiments>
</comment>
<comment type="interaction">
    <interactant intactId="EBI-3258000">
        <id>Q9P0N9</id>
    </interactant>
    <interactant intactId="EBI-1216080">
        <id>Q9Y250</id>
        <label>LZTS1</label>
    </interactant>
    <organismsDiffer>false</organismsDiffer>
    <experiments>3</experiments>
</comment>
<comment type="interaction">
    <interactant intactId="EBI-3258000">
        <id>Q9P0N9</id>
    </interactant>
    <interactant intactId="EBI-741037">
        <id>Q9BRK4</id>
        <label>LZTS2</label>
    </interactant>
    <organismsDiffer>false</organismsDiffer>
    <experiments>3</experiments>
</comment>
<comment type="interaction">
    <interactant intactId="EBI-3258000">
        <id>Q9P0N9</id>
    </interactant>
    <interactant intactId="EBI-2548751">
        <id>Q8TD10</id>
        <label>MIPOL1</label>
    </interactant>
    <organismsDiffer>false</organismsDiffer>
    <experiments>3</experiments>
</comment>
<comment type="interaction">
    <interactant intactId="EBI-3258000">
        <id>Q9P0N9</id>
    </interactant>
    <interactant intactId="EBI-11111575">
        <id>Q9H3L0</id>
        <label>MMADHC</label>
    </interactant>
    <organismsDiffer>false</organismsDiffer>
    <experiments>3</experiments>
</comment>
<comment type="interaction">
    <interactant intactId="EBI-3258000">
        <id>Q9P0N9</id>
    </interactant>
    <interactant intactId="EBI-79165">
        <id>Q9NRD5</id>
        <label>PICK1</label>
    </interactant>
    <organismsDiffer>false</organismsDiffer>
    <experiments>3</experiments>
</comment>
<comment type="interaction">
    <interactant intactId="EBI-3258000">
        <id>Q9P0N9</id>
    </interactant>
    <interactant intactId="EBI-1050213">
        <id>Q96KN7</id>
        <label>RPGRIP1</label>
    </interactant>
    <organismsDiffer>false</organismsDiffer>
    <experiments>3</experiments>
</comment>
<comment type="interaction">
    <interactant intactId="EBI-3258000">
        <id>Q9P0N9</id>
    </interactant>
    <interactant intactId="EBI-749607">
        <id>Q9NR46</id>
        <label>SH3GLB2</label>
    </interactant>
    <organismsDiffer>false</organismsDiffer>
    <experiments>3</experiments>
</comment>
<comment type="interaction">
    <interactant intactId="EBI-3258000">
        <id>Q9P0N9</id>
    </interactant>
    <interactant intactId="EBI-2515299">
        <id>O43805</id>
        <label>SSNA1</label>
    </interactant>
    <organismsDiffer>false</organismsDiffer>
    <experiments>7</experiments>
</comment>
<comment type="interaction">
    <interactant intactId="EBI-3258000">
        <id>Q9P0N9</id>
    </interactant>
    <interactant intactId="EBI-3650647">
        <id>Q9BUZ4</id>
        <label>TRAF4</label>
    </interactant>
    <organismsDiffer>false</organismsDiffer>
    <experiments>9</experiments>
</comment>
<comment type="interaction">
    <interactant intactId="EBI-3258000">
        <id>Q9P0N9</id>
    </interactant>
    <interactant intactId="EBI-6929619">
        <id>Q9BVG3</id>
        <label>TRIM62</label>
    </interactant>
    <organismsDiffer>false</organismsDiffer>
    <experiments>3</experiments>
</comment>
<comment type="interaction">
    <interactant intactId="EBI-3258000">
        <id>Q9P0N9</id>
    </interactant>
    <interactant intactId="EBI-1047085">
        <id>Q92574</id>
        <label>TSC1</label>
    </interactant>
    <organismsDiffer>false</organismsDiffer>
    <experiments>5</experiments>
</comment>
<comment type="interaction">
    <interactant intactId="EBI-3258000">
        <id>Q9P0N9</id>
    </interactant>
    <interactant intactId="EBI-295222">
        <id>P23025</id>
        <label>XPA</label>
    </interactant>
    <organismsDiffer>false</organismsDiffer>
    <experiments>3</experiments>
</comment>
<comment type="subcellular location">
    <subcellularLocation>
        <location evidence="6">Lysosome membrane</location>
    </subcellularLocation>
    <subcellularLocation>
        <location evidence="2">Cytoplasmic vesicle</location>
    </subcellularLocation>
    <subcellularLocation>
        <location evidence="6">Cytoplasm</location>
        <location evidence="6">Cytosol</location>
    </subcellularLocation>
    <text evidence="2 6">Localizes in the cytoplasmic vesicles of the endomembrane in association with the TSC-TBC complex (PubMed:17658474). Recruited to lysosomal membranes in a RHEB-dependent process in absence of nutrients (PubMed:24529379). In response to nutrients, the complex dissociates from lysosomal membranes and relocalizes to the cytosol (PubMed:24529379).</text>
</comment>
<comment type="alternative products">
    <event type="alternative splicing"/>
    <isoform>
        <id>Q9P0N9-1</id>
        <name>1</name>
        <sequence type="displayed"/>
    </isoform>
    <isoform>
        <id>Q9P0N9-2</id>
        <name>2</name>
        <sequence type="described" ref="VSP_041480"/>
    </isoform>
    <isoform>
        <id>Q9P0N9-3</id>
        <name>3</name>
        <sequence type="described" ref="VSP_044186"/>
    </isoform>
    <isoform>
        <id>Q9P0N9-4</id>
        <name>4</name>
        <sequence type="described" ref="VSP_044892"/>
    </isoform>
</comment>
<comment type="tissue specificity">
    <text evidence="2">Highly expressed in heart, and slightly in kidney, liver and placenta.</text>
</comment>
<comment type="disease" evidence="4 5">
    <disease id="DI-03993">
        <name>Macrocephaly/megalencephaly syndrome, autosomal recessive</name>
        <acronym>MGCPH</acronym>
        <description>An autosomal recessive disorder characterized by abnormal enlargement of the cerebral hemispheres, intellectual disability, large head, optic atrophy and underdeveloped skeletal musculature. Head enlargement may be evident at birth or the head may become abnormally large in the early years of life. Additional clinical features include behavioral abnormalities, psychosis, learning difficulties, prognathism, myopia and astigmatism.</description>
        <dbReference type="MIM" id="248000"/>
    </disease>
    <text>The disease is caused by variants affecting the gene represented in this entry.</text>
</comment>
<comment type="caution">
    <text evidence="16 17">Was initially identified as a negative regulator of the TSC-TBC complex (PubMed:17658474). However, it was later shown that TBC1D7 is part of the TSC-TBC complex and participates in GTPase-activating protein activity, leading to inhibition of the TOR signaling cascade (PubMed:22795129). The differences between 2 reports might be explained by experimental conditions in the initial report, in which they overexpressed the TBC1D7 subunit, possibly leading to disrupt the stoichiometric complex and its downstream functions.</text>
</comment>
<gene>
    <name evidence="12" type="primary">TBC1D7</name>
    <name evidence="11" type="synonym">TBC7</name>
    <name evidence="9" type="ORF">HSPC239</name>
</gene>
<sequence>MTEDSQRNFRSVYYEKVGFRGVEEKKSLEILLKDDRLDTEKLCTFSQRFPLPSMYRALVWKVLLGILPPHHESHAKVMMYRKEQYLDVLHALKVVRFVSDATPQAEVYLRMYQLESGKLPRSPSFPLEPDDEVFLAIAKAMEEMVEDSVDCYWITRRFVNQLNTKYRDSLPQLPKAFEQYLNLEDGRLLTHLRMCSAAPKLPYDLWFKRCFAGCLPESSLQRVWDKVVSGSCKILVFVAVEILLTFKIKVMALNSAEKITKFLENIPQDSSDAIVSKAIDLWHKHCGTPVHSS</sequence>
<accession>Q9P0N9</accession>
<accession>E7EV96</accession>
<accession>Q2TU37</accession>
<accession>Q53F44</accession>
<accession>Q5SZL7</accession>
<accession>Q86VM8</accession>
<accession>Q96MB8</accession>
<feature type="chain" id="PRO_0000208031" description="TBC1 domain family member 7">
    <location>
        <begin position="1"/>
        <end position="293"/>
    </location>
</feature>
<feature type="domain" description="Rab-GAP TBC" evidence="1">
    <location>
        <begin position="50"/>
        <end position="231"/>
    </location>
</feature>
<feature type="splice variant" id="VSP_044186" description="In isoform 3." evidence="10">
    <original>MTEDSQRNFRSVYYEKVGFRGVEEKKSLEILLKDDRLDTEKLCTFSQRFPLPSMYRALVWKVLLGILPPHHES</original>
    <variation>MEGASRNLASTPRV</variation>
    <location>
        <begin position="1"/>
        <end position="73"/>
    </location>
</feature>
<feature type="splice variant" id="VSP_041480" description="In isoform 2." evidence="13">
    <location>
        <begin position="38"/>
        <end position="64"/>
    </location>
</feature>
<feature type="splice variant" id="VSP_044892" description="In isoform 4." evidence="14">
    <location>
        <begin position="127"/>
        <end position="172"/>
    </location>
</feature>
<feature type="sequence variant" id="VAR_052537" description="In dbSNP:rs543580.">
    <original>L</original>
    <variation>W</variation>
    <location>
        <position position="67"/>
    </location>
</feature>
<feature type="sequence variant" id="VAR_052538" description="In dbSNP:rs9381921.">
    <original>A</original>
    <variation>T</variation>
    <location>
        <position position="136"/>
    </location>
</feature>
<feature type="mutagenesis site" description="Abolished formation of the TSC-TBC complex; when associated with A-121. Abolished interaction with TSC1 and TSC2; when associated with 94-A-A-95." evidence="7">
    <original>RKEQ</original>
    <variation>AKEA</variation>
    <location>
        <begin position="81"/>
        <end position="84"/>
    </location>
</feature>
<feature type="mutagenesis site" description="Abolished interaction with TSC1. Abolished interaction with TSC1 and TSC2; when associated with A-81--A-84." evidence="7">
    <original>VV</original>
    <variation>AA</variation>
    <location>
        <begin position="94"/>
        <end position="95"/>
    </location>
</feature>
<feature type="mutagenesis site" description="Decreased interaction with TSC1." evidence="7">
    <original>R</original>
    <variation>A</variation>
    <location>
        <position position="96"/>
    </location>
</feature>
<feature type="mutagenesis site" description="Abolished interaction with TSC1." evidence="7">
    <original>L</original>
    <variation>A</variation>
    <location>
        <position position="114"/>
    </location>
</feature>
<feature type="mutagenesis site" description="Abolished formation of the TSC-TBC complex; when associated with 81-A--A-84." evidence="7">
    <original>R</original>
    <variation>A</variation>
    <location>
        <position position="121"/>
    </location>
</feature>
<feature type="sequence conflict" description="In Ref. 6; BAD97165." evidence="15" ref="6">
    <original>V</original>
    <variation>I</variation>
    <location>
        <position position="59"/>
    </location>
</feature>
<feature type="helix" evidence="20">
    <location>
        <begin position="22"/>
        <end position="31"/>
    </location>
</feature>
<feature type="strand" evidence="20">
    <location>
        <begin position="34"/>
        <end position="36"/>
    </location>
</feature>
<feature type="helix" evidence="20">
    <location>
        <begin position="39"/>
        <end position="48"/>
    </location>
</feature>
<feature type="helix" evidence="20">
    <location>
        <begin position="53"/>
        <end position="63"/>
    </location>
</feature>
<feature type="helix" evidence="20">
    <location>
        <begin position="71"/>
        <end position="73"/>
    </location>
</feature>
<feature type="helix" evidence="20">
    <location>
        <begin position="74"/>
        <end position="94"/>
    </location>
</feature>
<feature type="strand" evidence="22">
    <location>
        <begin position="100"/>
        <end position="102"/>
    </location>
</feature>
<feature type="helix" evidence="20">
    <location>
        <begin position="104"/>
        <end position="116"/>
    </location>
</feature>
<feature type="strand" evidence="21">
    <location>
        <begin position="121"/>
        <end position="125"/>
    </location>
</feature>
<feature type="helix" evidence="20">
    <location>
        <begin position="129"/>
        <end position="144"/>
    </location>
</feature>
<feature type="helix" evidence="20">
    <location>
        <begin position="148"/>
        <end position="163"/>
    </location>
</feature>
<feature type="turn" evidence="20">
    <location>
        <begin position="164"/>
        <end position="169"/>
    </location>
</feature>
<feature type="helix" evidence="20">
    <location>
        <begin position="170"/>
        <end position="172"/>
    </location>
</feature>
<feature type="helix" evidence="20">
    <location>
        <begin position="173"/>
        <end position="184"/>
    </location>
</feature>
<feature type="helix" evidence="20">
    <location>
        <begin position="186"/>
        <end position="194"/>
    </location>
</feature>
<feature type="helix" evidence="20">
    <location>
        <begin position="198"/>
        <end position="200"/>
    </location>
</feature>
<feature type="helix" evidence="20">
    <location>
        <begin position="203"/>
        <end position="207"/>
    </location>
</feature>
<feature type="turn" evidence="20">
    <location>
        <begin position="210"/>
        <end position="214"/>
    </location>
</feature>
<feature type="helix" evidence="20">
    <location>
        <begin position="217"/>
        <end position="228"/>
    </location>
</feature>
<feature type="helix" evidence="20">
    <location>
        <begin position="234"/>
        <end position="245"/>
    </location>
</feature>
<feature type="helix" evidence="20">
    <location>
        <begin position="247"/>
        <end position="252"/>
    </location>
</feature>
<feature type="helix" evidence="20">
    <location>
        <begin position="256"/>
        <end position="263"/>
    </location>
</feature>
<feature type="helix" evidence="20">
    <location>
        <begin position="271"/>
        <end position="286"/>
    </location>
</feature>
<dbReference type="EMBL" id="AB449888">
    <property type="protein sequence ID" value="BAH16631.1"/>
    <property type="molecule type" value="mRNA"/>
</dbReference>
<dbReference type="EMBL" id="AY826820">
    <property type="protein sequence ID" value="AAX18640.1"/>
    <property type="molecule type" value="mRNA"/>
</dbReference>
<dbReference type="EMBL" id="AK057228">
    <property type="protein sequence ID" value="BAB71389.1"/>
    <property type="molecule type" value="mRNA"/>
</dbReference>
<dbReference type="EMBL" id="AF151073">
    <property type="protein sequence ID" value="AAF36159.1"/>
    <property type="molecule type" value="mRNA"/>
</dbReference>
<dbReference type="EMBL" id="AY542308">
    <property type="protein sequence ID" value="AAT08177.1"/>
    <property type="molecule type" value="mRNA"/>
</dbReference>
<dbReference type="EMBL" id="AK223445">
    <property type="protein sequence ID" value="BAD97165.1"/>
    <property type="molecule type" value="mRNA"/>
</dbReference>
<dbReference type="EMBL" id="AL008729">
    <property type="status" value="NOT_ANNOTATED_CDS"/>
    <property type="molecule type" value="Genomic_DNA"/>
</dbReference>
<dbReference type="EMBL" id="AL589984">
    <property type="status" value="NOT_ANNOTATED_CDS"/>
    <property type="molecule type" value="Genomic_DNA"/>
</dbReference>
<dbReference type="EMBL" id="CH471087">
    <property type="protein sequence ID" value="EAW55325.1"/>
    <property type="molecule type" value="Genomic_DNA"/>
</dbReference>
<dbReference type="EMBL" id="CH471087">
    <property type="protein sequence ID" value="EAW55323.1"/>
    <property type="molecule type" value="Genomic_DNA"/>
</dbReference>
<dbReference type="EMBL" id="BC050465">
    <property type="protein sequence ID" value="AAH50465.1"/>
    <property type="molecule type" value="mRNA"/>
</dbReference>
<dbReference type="EMBL" id="BC007054">
    <property type="protein sequence ID" value="AAH07054.1"/>
    <property type="molecule type" value="mRNA"/>
</dbReference>
<dbReference type="CCDS" id="CCDS47376.1">
    <molecule id="Q9P0N9-2"/>
</dbReference>
<dbReference type="CCDS" id="CCDS58995.1">
    <molecule id="Q9P0N9-4"/>
</dbReference>
<dbReference type="RefSeq" id="NP_001137436.1">
    <molecule id="Q9P0N9-1"/>
    <property type="nucleotide sequence ID" value="NM_001143964.4"/>
</dbReference>
<dbReference type="RefSeq" id="NP_001137437.1">
    <molecule id="Q9P0N9-1"/>
    <property type="nucleotide sequence ID" value="NM_001143965.4"/>
</dbReference>
<dbReference type="RefSeq" id="NP_001137438.1">
    <molecule id="Q9P0N9-2"/>
    <property type="nucleotide sequence ID" value="NM_001143966.4"/>
</dbReference>
<dbReference type="RefSeq" id="NP_001245386.1">
    <molecule id="Q9P0N9-4"/>
    <property type="nucleotide sequence ID" value="NM_001258457.3"/>
</dbReference>
<dbReference type="RefSeq" id="NP_001305734.1">
    <molecule id="Q9P0N9-1"/>
    <property type="nucleotide sequence ID" value="NM_001318805.2"/>
</dbReference>
<dbReference type="RefSeq" id="NP_001305738.1">
    <molecule id="Q9P0N9-1"/>
    <property type="nucleotide sequence ID" value="NM_001318809.1"/>
</dbReference>
<dbReference type="RefSeq" id="NP_057579.1">
    <molecule id="Q9P0N9-1"/>
    <property type="nucleotide sequence ID" value="NM_016495.6"/>
</dbReference>
<dbReference type="PDB" id="3QWL">
    <property type="method" value="X-ray"/>
    <property type="resolution" value="1.90 A"/>
    <property type="chains" value="A=1-293"/>
</dbReference>
<dbReference type="PDB" id="4Z6Y">
    <property type="method" value="X-ray"/>
    <property type="resolution" value="2.81 A"/>
    <property type="chains" value="A/B/E/G=21-293"/>
</dbReference>
<dbReference type="PDB" id="5EJC">
    <property type="method" value="X-ray"/>
    <property type="resolution" value="3.10 A"/>
    <property type="chains" value="A/B=18-293"/>
</dbReference>
<dbReference type="PDB" id="5ULO">
    <property type="method" value="X-ray"/>
    <property type="resolution" value="2.14 A"/>
    <property type="chains" value="C/D=115-126"/>
</dbReference>
<dbReference type="PDB" id="7DL2">
    <property type="method" value="EM"/>
    <property type="resolution" value="4.40 A"/>
    <property type="chains" value="E=21-287"/>
</dbReference>
<dbReference type="PDB" id="9CE3">
    <property type="method" value="EM"/>
    <property type="resolution" value="2.90 A"/>
    <property type="chains" value="E=1-293"/>
</dbReference>
<dbReference type="PDBsum" id="3QWL"/>
<dbReference type="PDBsum" id="4Z6Y"/>
<dbReference type="PDBsum" id="5EJC"/>
<dbReference type="PDBsum" id="5ULO"/>
<dbReference type="PDBsum" id="7DL2"/>
<dbReference type="PDBsum" id="9CE3"/>
<dbReference type="EMDB" id="EMD-11816"/>
<dbReference type="EMDB" id="EMD-11817"/>
<dbReference type="EMDB" id="EMD-11819"/>
<dbReference type="EMDB" id="EMD-30708"/>
<dbReference type="EMDB" id="EMD-45492"/>
<dbReference type="SMR" id="Q9P0N9"/>
<dbReference type="BioGRID" id="119412">
    <property type="interactions" value="65"/>
</dbReference>
<dbReference type="ComplexPortal" id="CPX-6142">
    <property type="entry name" value="TSC1-TSC2 complex"/>
</dbReference>
<dbReference type="CORUM" id="Q9P0N9"/>
<dbReference type="FunCoup" id="Q9P0N9">
    <property type="interactions" value="1604"/>
</dbReference>
<dbReference type="IntAct" id="Q9P0N9">
    <property type="interactions" value="37"/>
</dbReference>
<dbReference type="MINT" id="Q9P0N9"/>
<dbReference type="STRING" id="9606.ENSP00000475727"/>
<dbReference type="iPTMnet" id="Q9P0N9"/>
<dbReference type="PhosphoSitePlus" id="Q9P0N9"/>
<dbReference type="BioMuta" id="TBC1D7"/>
<dbReference type="DMDM" id="37538019"/>
<dbReference type="jPOST" id="Q9P0N9"/>
<dbReference type="MassIVE" id="Q9P0N9"/>
<dbReference type="PaxDb" id="9606-ENSP00000475727"/>
<dbReference type="PeptideAtlas" id="Q9P0N9"/>
<dbReference type="ProteomicsDB" id="61499"/>
<dbReference type="ProteomicsDB" id="77329"/>
<dbReference type="ProteomicsDB" id="83587">
    <molecule id="Q9P0N9-1"/>
</dbReference>
<dbReference type="ProteomicsDB" id="83588">
    <molecule id="Q9P0N9-2"/>
</dbReference>
<dbReference type="Pumba" id="Q9P0N9"/>
<dbReference type="TopDownProteomics" id="Q9P0N9-1">
    <molecule id="Q9P0N9-1"/>
</dbReference>
<dbReference type="Antibodypedia" id="24944">
    <property type="antibodies" value="98 antibodies from 20 providers"/>
</dbReference>
<dbReference type="DNASU" id="51256"/>
<dbReference type="Ensembl" id="ENST00000343141.8">
    <molecule id="Q9P0N9-4"/>
    <property type="protein sequence ID" value="ENSP00000343100.4"/>
    <property type="gene ID" value="ENSG00000145979.18"/>
</dbReference>
<dbReference type="Ensembl" id="ENST00000356436.8">
    <molecule id="Q9P0N9-1"/>
    <property type="protein sequence ID" value="ENSP00000348813.4"/>
    <property type="gene ID" value="ENSG00000145979.18"/>
</dbReference>
<dbReference type="Ensembl" id="ENST00000379300.8">
    <molecule id="Q9P0N9-1"/>
    <property type="protein sequence ID" value="ENSP00000368602.3"/>
    <property type="gene ID" value="ENSG00000145979.18"/>
</dbReference>
<dbReference type="Ensembl" id="ENST00000379307.6">
    <molecule id="Q9P0N9-2"/>
    <property type="protein sequence ID" value="ENSP00000368609.2"/>
    <property type="gene ID" value="ENSG00000145979.18"/>
</dbReference>
<dbReference type="Ensembl" id="ENST00000606214.5">
    <molecule id="Q9P0N9-1"/>
    <property type="protein sequence ID" value="ENSP00000475727.1"/>
    <property type="gene ID" value="ENSG00000145979.18"/>
</dbReference>
<dbReference type="GeneID" id="51256"/>
<dbReference type="KEGG" id="hsa:107080638"/>
<dbReference type="KEGG" id="hsa:51256"/>
<dbReference type="MANE-Select" id="ENST00000379300.8">
    <property type="protein sequence ID" value="ENSP00000368602.3"/>
    <property type="RefSeq nucleotide sequence ID" value="NM_016495.6"/>
    <property type="RefSeq protein sequence ID" value="NP_057579.1"/>
</dbReference>
<dbReference type="UCSC" id="uc003nal.5">
    <molecule id="Q9P0N9-1"/>
    <property type="organism name" value="human"/>
</dbReference>
<dbReference type="AGR" id="HGNC:21066"/>
<dbReference type="CTD" id="107080638"/>
<dbReference type="CTD" id="51256"/>
<dbReference type="DisGeNET" id="107080638"/>
<dbReference type="DisGeNET" id="51256"/>
<dbReference type="GeneCards" id="TBC1D7"/>
<dbReference type="HGNC" id="HGNC:21066">
    <property type="gene designation" value="TBC1D7"/>
</dbReference>
<dbReference type="HPA" id="ENSG00000145979">
    <property type="expression patterns" value="Low tissue specificity"/>
</dbReference>
<dbReference type="MalaCards" id="TBC1D7"/>
<dbReference type="MIM" id="248000">
    <property type="type" value="phenotype"/>
</dbReference>
<dbReference type="MIM" id="612655">
    <property type="type" value="gene"/>
</dbReference>
<dbReference type="neXtProt" id="NX_Q9P0N9"/>
<dbReference type="OpenTargets" id="ENSG00000145979"/>
<dbReference type="Orphanet" id="2477">
    <property type="disease" value="Isolated megalencephaly"/>
</dbReference>
<dbReference type="PharmGKB" id="PA134929978"/>
<dbReference type="VEuPathDB" id="HostDB:ENSG00000145979"/>
<dbReference type="eggNOG" id="ENOG502QPZD">
    <property type="taxonomic scope" value="Eukaryota"/>
</dbReference>
<dbReference type="GeneTree" id="ENSGT00390000009122"/>
<dbReference type="HOGENOM" id="CLU_082520_0_0_1"/>
<dbReference type="InParanoid" id="Q9P0N9"/>
<dbReference type="OMA" id="VMHTMWL"/>
<dbReference type="OrthoDB" id="18718at2759"/>
<dbReference type="PAN-GO" id="Q9P0N9">
    <property type="GO annotations" value="3 GO annotations based on evolutionary models"/>
</dbReference>
<dbReference type="PhylomeDB" id="Q9P0N9"/>
<dbReference type="TreeFam" id="TF323655"/>
<dbReference type="PathwayCommons" id="Q9P0N9"/>
<dbReference type="Reactome" id="R-HSA-8854214">
    <property type="pathway name" value="TBC/RABGAPs"/>
</dbReference>
<dbReference type="SignaLink" id="Q9P0N9"/>
<dbReference type="SIGNOR" id="Q9P0N9"/>
<dbReference type="BioGRID-ORCS" id="107080638">
    <property type="hits" value="0 hits in 3 CRISPR screens"/>
</dbReference>
<dbReference type="BioGRID-ORCS" id="51256">
    <property type="hits" value="31 hits in 1170 CRISPR screens"/>
</dbReference>
<dbReference type="EvolutionaryTrace" id="Q9P0N9"/>
<dbReference type="Pharos" id="Q9P0N9">
    <property type="development level" value="Tbio"/>
</dbReference>
<dbReference type="PRO" id="PR:Q9P0N9"/>
<dbReference type="Proteomes" id="UP000005640">
    <property type="component" value="Chromosome 6"/>
</dbReference>
<dbReference type="RNAct" id="Q9P0N9">
    <property type="molecule type" value="protein"/>
</dbReference>
<dbReference type="Bgee" id="ENSG00000145979">
    <property type="expression patterns" value="Expressed in cortical plate and 169 other cell types or tissues"/>
</dbReference>
<dbReference type="ExpressionAtlas" id="Q9P0N9">
    <property type="expression patterns" value="baseline and differential"/>
</dbReference>
<dbReference type="GO" id="GO:0036064">
    <property type="term" value="C:ciliary basal body"/>
    <property type="evidence" value="ECO:0000314"/>
    <property type="project" value="UniProtKB"/>
</dbReference>
<dbReference type="GO" id="GO:0031410">
    <property type="term" value="C:cytoplasmic vesicle"/>
    <property type="evidence" value="ECO:0000314"/>
    <property type="project" value="UniProtKB"/>
</dbReference>
<dbReference type="GO" id="GO:0005829">
    <property type="term" value="C:cytosol"/>
    <property type="evidence" value="ECO:0000314"/>
    <property type="project" value="UniProtKB"/>
</dbReference>
<dbReference type="GO" id="GO:0005765">
    <property type="term" value="C:lysosomal membrane"/>
    <property type="evidence" value="ECO:0000314"/>
    <property type="project" value="UniProtKB"/>
</dbReference>
<dbReference type="GO" id="GO:0033596">
    <property type="term" value="C:TSC1-TSC2 complex"/>
    <property type="evidence" value="ECO:0000314"/>
    <property type="project" value="UniProtKB"/>
</dbReference>
<dbReference type="GO" id="GO:0005096">
    <property type="term" value="F:GTPase activator activity"/>
    <property type="evidence" value="ECO:0000314"/>
    <property type="project" value="UniProtKB"/>
</dbReference>
<dbReference type="GO" id="GO:0031267">
    <property type="term" value="F:small GTPase binding"/>
    <property type="evidence" value="ECO:0000353"/>
    <property type="project" value="UniProtKB"/>
</dbReference>
<dbReference type="GO" id="GO:0062078">
    <property type="term" value="F:TSC1-TSC2 complex binding"/>
    <property type="evidence" value="ECO:0000318"/>
    <property type="project" value="GO_Central"/>
</dbReference>
<dbReference type="GO" id="GO:0090630">
    <property type="term" value="P:activation of GTPase activity"/>
    <property type="evidence" value="ECO:0000315"/>
    <property type="project" value="UniProtKB"/>
</dbReference>
<dbReference type="GO" id="GO:0009267">
    <property type="term" value="P:cellular response to starvation"/>
    <property type="evidence" value="ECO:0000314"/>
    <property type="project" value="UniProtKB"/>
</dbReference>
<dbReference type="GO" id="GO:1902018">
    <property type="term" value="P:negative regulation of cilium assembly"/>
    <property type="evidence" value="ECO:0000315"/>
    <property type="project" value="UniProtKB"/>
</dbReference>
<dbReference type="GO" id="GO:0032007">
    <property type="term" value="P:negative regulation of TOR signaling"/>
    <property type="evidence" value="ECO:0000314"/>
    <property type="project" value="ComplexPortal"/>
</dbReference>
<dbReference type="GO" id="GO:1904262">
    <property type="term" value="P:negative regulation of TORC1 signaling"/>
    <property type="evidence" value="ECO:0000314"/>
    <property type="project" value="UniProtKB"/>
</dbReference>
<dbReference type="GO" id="GO:0043547">
    <property type="term" value="P:positive regulation of GTPase activity"/>
    <property type="evidence" value="ECO:0000314"/>
    <property type="project" value="UniProtKB"/>
</dbReference>
<dbReference type="GO" id="GO:0031398">
    <property type="term" value="P:positive regulation of protein ubiquitination"/>
    <property type="evidence" value="ECO:0000314"/>
    <property type="project" value="UniProtKB"/>
</dbReference>
<dbReference type="GO" id="GO:0070848">
    <property type="term" value="P:response to growth factor"/>
    <property type="evidence" value="ECO:0000315"/>
    <property type="project" value="UniProtKB"/>
</dbReference>
<dbReference type="FunFam" id="1.10.10.750:FF:000006">
    <property type="entry name" value="TBC1 domain family member 7"/>
    <property type="match status" value="1"/>
</dbReference>
<dbReference type="FunFam" id="1.10.472.80:FF:000028">
    <property type="entry name" value="TBC1 domain family member 7"/>
    <property type="match status" value="1"/>
</dbReference>
<dbReference type="FunFam" id="1.10.8.680:FF:000001">
    <property type="entry name" value="TBC1 domain family, member 7"/>
    <property type="match status" value="1"/>
</dbReference>
<dbReference type="Gene3D" id="1.10.10.750">
    <property type="entry name" value="Ypt/Rab-GAP domain of gyp1p, domain 1"/>
    <property type="match status" value="1"/>
</dbReference>
<dbReference type="Gene3D" id="1.10.8.680">
    <property type="entry name" value="Ypt/Rab-GAP domain of gyp1p, domain 2"/>
    <property type="match status" value="1"/>
</dbReference>
<dbReference type="Gene3D" id="1.10.472.80">
    <property type="entry name" value="Ypt/Rab-GAP domain of gyp1p, domain 3"/>
    <property type="match status" value="1"/>
</dbReference>
<dbReference type="InterPro" id="IPR000195">
    <property type="entry name" value="Rab-GAP-TBC_dom"/>
</dbReference>
<dbReference type="InterPro" id="IPR035969">
    <property type="entry name" value="Rab-GAP_TBC_sf"/>
</dbReference>
<dbReference type="InterPro" id="IPR039842">
    <property type="entry name" value="TBC1D7"/>
</dbReference>
<dbReference type="InterPro" id="IPR043039">
    <property type="entry name" value="TBC1D7_dom2"/>
</dbReference>
<dbReference type="PANTHER" id="PTHR13530">
    <property type="entry name" value="TBC1 DOMAIN FAMILY MEMBER 7"/>
    <property type="match status" value="1"/>
</dbReference>
<dbReference type="PANTHER" id="PTHR13530:SF3">
    <property type="entry name" value="TBC1 DOMAIN FAMILY MEMBER 7"/>
    <property type="match status" value="1"/>
</dbReference>
<dbReference type="Pfam" id="PF00566">
    <property type="entry name" value="RabGAP-TBC"/>
    <property type="match status" value="1"/>
</dbReference>
<dbReference type="SUPFAM" id="SSF47923">
    <property type="entry name" value="Ypt/Rab-GAP domain of gyp1p"/>
    <property type="match status" value="2"/>
</dbReference>
<dbReference type="PROSITE" id="PS50086">
    <property type="entry name" value="TBC_RABGAP"/>
    <property type="match status" value="1"/>
</dbReference>
<proteinExistence type="evidence at protein level"/>
<keyword id="KW-0002">3D-structure</keyword>
<keyword id="KW-0025">Alternative splicing</keyword>
<keyword id="KW-0963">Cytoplasm</keyword>
<keyword id="KW-0968">Cytoplasmic vesicle</keyword>
<keyword id="KW-0343">GTPase activation</keyword>
<keyword id="KW-0458">Lysosome</keyword>
<keyword id="KW-0472">Membrane</keyword>
<keyword id="KW-1267">Proteomics identification</keyword>
<keyword id="KW-1185">Reference proteome</keyword>
<evidence type="ECO:0000255" key="1">
    <source>
        <dbReference type="PROSITE-ProRule" id="PRU00163"/>
    </source>
</evidence>
<evidence type="ECO:0000269" key="2">
    <source>
    </source>
</evidence>
<evidence type="ECO:0000269" key="3">
    <source>
    </source>
</evidence>
<evidence type="ECO:0000269" key="4">
    <source>
    </source>
</evidence>
<evidence type="ECO:0000269" key="5">
    <source>
    </source>
</evidence>
<evidence type="ECO:0000269" key="6">
    <source>
    </source>
</evidence>
<evidence type="ECO:0000269" key="7">
    <source>
    </source>
</evidence>
<evidence type="ECO:0000269" key="8">
    <source>
    </source>
</evidence>
<evidence type="ECO:0000303" key="9">
    <source>
    </source>
</evidence>
<evidence type="ECO:0000303" key="10">
    <source>
    </source>
</evidence>
<evidence type="ECO:0000303" key="11">
    <source>
    </source>
</evidence>
<evidence type="ECO:0000303" key="12">
    <source>
    </source>
</evidence>
<evidence type="ECO:0000303" key="13">
    <source ref="2"/>
</evidence>
<evidence type="ECO:0000303" key="14">
    <source ref="5"/>
</evidence>
<evidence type="ECO:0000305" key="15"/>
<evidence type="ECO:0000305" key="16">
    <source>
    </source>
</evidence>
<evidence type="ECO:0000305" key="17">
    <source>
    </source>
</evidence>
<evidence type="ECO:0007744" key="18">
    <source>
        <dbReference type="PDB" id="5EJC"/>
    </source>
</evidence>
<evidence type="ECO:0007744" key="19">
    <source>
        <dbReference type="PDB" id="7DL2"/>
    </source>
</evidence>
<evidence type="ECO:0007829" key="20">
    <source>
        <dbReference type="PDB" id="3QWL"/>
    </source>
</evidence>
<evidence type="ECO:0007829" key="21">
    <source>
        <dbReference type="PDB" id="4Z6Y"/>
    </source>
</evidence>
<evidence type="ECO:0007829" key="22">
    <source>
        <dbReference type="PDB" id="9CE3"/>
    </source>
</evidence>